<evidence type="ECO:0000255" key="1">
    <source>
        <dbReference type="PROSITE-ProRule" id="PRU00624"/>
    </source>
</evidence>
<evidence type="ECO:0000269" key="2">
    <source>
    </source>
</evidence>
<evidence type="ECO:0000269" key="3">
    <source>
    </source>
</evidence>
<evidence type="ECO:0007829" key="4">
    <source>
        <dbReference type="PDB" id="2CJJ"/>
    </source>
</evidence>
<sequence length="93" mass="10774">MASTRGSGRPWSAKENKAFERALAVYDKDTPDRWANVARAVEGRTPEEVKKHYEILVEDIKYIESGKVPFPNYRTTGGNMKTDEKRFRNLKIR</sequence>
<accession>Q58FS3</accession>
<reference key="1">
    <citation type="journal article" date="2005" name="Proc. Natl. Acad. Sci. U.S.A.">
        <title>Floral asymmetry involves an interplay between TCP and MYB transcription factors in Antirrhinum.</title>
        <authorList>
            <person name="Corley S.B."/>
            <person name="Carpenter R."/>
            <person name="Copsey L."/>
            <person name="Coen E."/>
        </authorList>
    </citation>
    <scope>NUCLEOTIDE SEQUENCE [GENOMIC DNA]</scope>
    <scope>TISSUE SPECIFICITY</scope>
    <scope>FUNCTION</scope>
    <scope>DISRUPTION PHENOTYPE</scope>
    <scope>DEVELOPMENTAL STAGE</scope>
    <scope>INDUCTION</scope>
</reference>
<reference key="2">
    <citation type="journal article" date="2005" name="Development">
        <title>Evolution of regulatory interactions controlling floral asymmetry.</title>
        <authorList>
            <person name="Costa M.M."/>
            <person name="Fox S."/>
            <person name="Hanna A.I."/>
            <person name="Baxter C."/>
            <person name="Coen E."/>
        </authorList>
    </citation>
    <scope>INDUCTION</scope>
</reference>
<reference key="3">
    <citation type="journal article" date="2006" name="Proteins">
        <title>Crystal structure of the MYB domain of the RAD transcription factor from Antirrhinum majus.</title>
        <authorList>
            <person name="Stevenson C.E."/>
            <person name="Burton N."/>
            <person name="Costa M.M."/>
            <person name="Nath U."/>
            <person name="Dixon R.A."/>
            <person name="Coen E.S."/>
            <person name="Lawson D.M."/>
        </authorList>
    </citation>
    <scope>X-RAY CRYSTALLOGRAPHY (1.90 ANGSTROMS)</scope>
</reference>
<gene>
    <name type="primary">RAD</name>
</gene>
<dbReference type="EMBL" id="AY954971">
    <property type="protein sequence ID" value="AAX48042.1"/>
    <property type="molecule type" value="Genomic_DNA"/>
</dbReference>
<dbReference type="PDB" id="2CJJ">
    <property type="method" value="X-ray"/>
    <property type="resolution" value="1.90 A"/>
    <property type="chains" value="A=1-93"/>
</dbReference>
<dbReference type="PDBsum" id="2CJJ"/>
<dbReference type="SMR" id="Q58FS3"/>
<dbReference type="EvolutionaryTrace" id="Q58FS3"/>
<dbReference type="GO" id="GO:0005634">
    <property type="term" value="C:nucleus"/>
    <property type="evidence" value="ECO:0007669"/>
    <property type="project" value="UniProtKB-SubCell"/>
</dbReference>
<dbReference type="GO" id="GO:0003700">
    <property type="term" value="F:DNA-binding transcription factor activity"/>
    <property type="evidence" value="ECO:0007669"/>
    <property type="project" value="InterPro"/>
</dbReference>
<dbReference type="GO" id="GO:0048262">
    <property type="term" value="P:determination of dorsal/ventral asymmetry"/>
    <property type="evidence" value="ECO:0000315"/>
    <property type="project" value="UniProtKB"/>
</dbReference>
<dbReference type="GO" id="GO:0009908">
    <property type="term" value="P:flower development"/>
    <property type="evidence" value="ECO:0000315"/>
    <property type="project" value="UniProtKB"/>
</dbReference>
<dbReference type="CDD" id="cd00167">
    <property type="entry name" value="SANT"/>
    <property type="match status" value="1"/>
</dbReference>
<dbReference type="FunFam" id="1.10.10.60:FF:000154">
    <property type="entry name" value="Transcription factor SRM1"/>
    <property type="match status" value="1"/>
</dbReference>
<dbReference type="Gene3D" id="1.10.10.60">
    <property type="entry name" value="Homeodomain-like"/>
    <property type="match status" value="1"/>
</dbReference>
<dbReference type="InterPro" id="IPR009057">
    <property type="entry name" value="Homeodomain-like_sf"/>
</dbReference>
<dbReference type="InterPro" id="IPR044636">
    <property type="entry name" value="RADIALIS-like"/>
</dbReference>
<dbReference type="InterPro" id="IPR001005">
    <property type="entry name" value="SANT/Myb"/>
</dbReference>
<dbReference type="InterPro" id="IPR017884">
    <property type="entry name" value="SANT_dom"/>
</dbReference>
<dbReference type="PANTHER" id="PTHR43952">
    <property type="entry name" value="MYB FAMILY TRANSCRIPTION FACTOR-RELATED"/>
    <property type="match status" value="1"/>
</dbReference>
<dbReference type="PANTHER" id="PTHR43952:SF13">
    <property type="entry name" value="OS05G0567600 PROTEIN"/>
    <property type="match status" value="1"/>
</dbReference>
<dbReference type="Pfam" id="PF00249">
    <property type="entry name" value="Myb_DNA-binding"/>
    <property type="match status" value="1"/>
</dbReference>
<dbReference type="SMART" id="SM00717">
    <property type="entry name" value="SANT"/>
    <property type="match status" value="1"/>
</dbReference>
<dbReference type="SUPFAM" id="SSF46689">
    <property type="entry name" value="Homeodomain-like"/>
    <property type="match status" value="1"/>
</dbReference>
<dbReference type="PROSITE" id="PS51293">
    <property type="entry name" value="SANT"/>
    <property type="match status" value="1"/>
</dbReference>
<keyword id="KW-0002">3D-structure</keyword>
<keyword id="KW-0217">Developmental protein</keyword>
<keyword id="KW-0539">Nucleus</keyword>
<keyword id="KW-0804">Transcription</keyword>
<keyword id="KW-0805">Transcription regulation</keyword>
<organism>
    <name type="scientific">Antirrhinum majus</name>
    <name type="common">Garden snapdragon</name>
    <dbReference type="NCBI Taxonomy" id="4151"/>
    <lineage>
        <taxon>Eukaryota</taxon>
        <taxon>Viridiplantae</taxon>
        <taxon>Streptophyta</taxon>
        <taxon>Embryophyta</taxon>
        <taxon>Tracheophyta</taxon>
        <taxon>Spermatophyta</taxon>
        <taxon>Magnoliopsida</taxon>
        <taxon>eudicotyledons</taxon>
        <taxon>Gunneridae</taxon>
        <taxon>Pentapetalae</taxon>
        <taxon>asterids</taxon>
        <taxon>lamiids</taxon>
        <taxon>Lamiales</taxon>
        <taxon>Plantaginaceae</taxon>
        <taxon>Antirrhineae</taxon>
        <taxon>Antirrhinum</taxon>
    </lineage>
</organism>
<protein>
    <recommendedName>
        <fullName>Transcription factor RADIALIS</fullName>
    </recommendedName>
</protein>
<proteinExistence type="evidence at protein level"/>
<feature type="chain" id="PRO_0000419439" description="Transcription factor RADIALIS">
    <location>
        <begin position="1"/>
        <end position="93"/>
    </location>
</feature>
<feature type="domain" description="SANT" evidence="1">
    <location>
        <begin position="6"/>
        <end position="61"/>
    </location>
</feature>
<feature type="helix" evidence="4">
    <location>
        <begin position="13"/>
        <end position="25"/>
    </location>
</feature>
<feature type="helix" evidence="4">
    <location>
        <begin position="33"/>
        <end position="40"/>
    </location>
</feature>
<feature type="helix" evidence="4">
    <location>
        <begin position="46"/>
        <end position="65"/>
    </location>
</feature>
<comment type="function">
    <text evidence="2">Involved in the dorsovental asymmetry of flowers. Promotes dorsal identity.</text>
</comment>
<comment type="subcellular location">
    <subcellularLocation>
        <location evidence="1">Nucleus</location>
    </subcellularLocation>
</comment>
<comment type="tissue specificity">
    <text evidence="2">Specifically expressed in the dorsal region of developing flowers.</text>
</comment>
<comment type="developmental stage">
    <text evidence="2">Early expressed at stage two (plastochrons 7 and 8), when the floral meristem comprised a loaf-shaped bulge of cells. Expression was in the dorsal region of the floral meristem. At stage four, when sepal primordia had emerged around the meristem dome, expression could be seen in the dorsal sepal primordium. At stage five, expressed in emerging dorsal primordia of whorls two and three. In older flower buds (stages seven and eight), expression was found mainly in the dorsal petals and staminode.</text>
</comment>
<comment type="induction">
    <text evidence="2 3">Up-regulated by both CYC and DICH.</text>
</comment>
<comment type="disruption phenotype">
    <text evidence="2">Radially symmetric flowers. Loss of functional stamens in dorsal positions. Organs reduction with five organs per whorl rather than six.</text>
</comment>
<name>RAD_ANTMA</name>